<comment type="function">
    <text evidence="1">Catalyzes the GTP-dependent phosphorylation of the 3'-hydroxyl group of dephosphocoenzyme A to form coenzyme A (CoA).</text>
</comment>
<comment type="catalytic activity">
    <reaction evidence="1">
        <text>3'-dephospho-CoA + GTP = GDP + CoA + H(+)</text>
        <dbReference type="Rhea" id="RHEA:61156"/>
        <dbReference type="ChEBI" id="CHEBI:15378"/>
        <dbReference type="ChEBI" id="CHEBI:37565"/>
        <dbReference type="ChEBI" id="CHEBI:57287"/>
        <dbReference type="ChEBI" id="CHEBI:57328"/>
        <dbReference type="ChEBI" id="CHEBI:58189"/>
        <dbReference type="EC" id="2.7.1.237"/>
    </reaction>
</comment>
<comment type="pathway">
    <text evidence="1">Cofactor biosynthesis; coenzyme A biosynthesis.</text>
</comment>
<comment type="similarity">
    <text evidence="1">Belongs to the GTP-dependent DPCK family.</text>
</comment>
<name>DPCKG_METMA</name>
<proteinExistence type="inferred from homology"/>
<feature type="chain" id="PRO_0000137610" description="GTP-dependent dephospho-CoA kinase">
    <location>
        <begin position="1"/>
        <end position="195"/>
    </location>
</feature>
<feature type="binding site" evidence="1">
    <location>
        <position position="49"/>
    </location>
    <ligand>
        <name>GTP</name>
        <dbReference type="ChEBI" id="CHEBI:37565"/>
    </ligand>
</feature>
<feature type="binding site" evidence="1">
    <location>
        <position position="50"/>
    </location>
    <ligand>
        <name>GTP</name>
        <dbReference type="ChEBI" id="CHEBI:37565"/>
    </ligand>
</feature>
<feature type="binding site" evidence="1">
    <location>
        <position position="68"/>
    </location>
    <ligand>
        <name>GTP</name>
        <dbReference type="ChEBI" id="CHEBI:37565"/>
    </ligand>
</feature>
<feature type="binding site" evidence="1">
    <location>
        <position position="127"/>
    </location>
    <ligand>
        <name>GTP</name>
        <dbReference type="ChEBI" id="CHEBI:37565"/>
    </ligand>
</feature>
<feature type="binding site" evidence="1">
    <location>
        <position position="150"/>
    </location>
    <ligand>
        <name>GTP</name>
        <dbReference type="ChEBI" id="CHEBI:37565"/>
    </ligand>
</feature>
<evidence type="ECO:0000255" key="1">
    <source>
        <dbReference type="HAMAP-Rule" id="MF_00590"/>
    </source>
</evidence>
<protein>
    <recommendedName>
        <fullName evidence="1">GTP-dependent dephospho-CoA kinase</fullName>
        <ecNumber evidence="1">2.7.1.237</ecNumber>
    </recommendedName>
    <alternativeName>
        <fullName evidence="1">Dephospho-coenzyme A kinase</fullName>
        <shortName evidence="1">DPCK</shortName>
    </alternativeName>
</protein>
<gene>
    <name type="ordered locus">MM_0598</name>
</gene>
<organism>
    <name type="scientific">Methanosarcina mazei (strain ATCC BAA-159 / DSM 3647 / Goe1 / Go1 / JCM 11833 / OCM 88)</name>
    <name type="common">Methanosarcina frisia</name>
    <dbReference type="NCBI Taxonomy" id="192952"/>
    <lineage>
        <taxon>Archaea</taxon>
        <taxon>Methanobacteriati</taxon>
        <taxon>Methanobacteriota</taxon>
        <taxon>Stenosarchaea group</taxon>
        <taxon>Methanomicrobia</taxon>
        <taxon>Methanosarcinales</taxon>
        <taxon>Methanosarcinaceae</taxon>
        <taxon>Methanosarcina</taxon>
    </lineage>
</organism>
<accession>Q8PZ96</accession>
<sequence length="195" mass="21900">MSVHIELPRELRPLMKKPLGILYRGKGRDTIEKFAGELSSPTKLISVGDVTTFHLLEAGIIPDICIVDDRTKRKPVSSDVSVRNRDKVYEEVSVDNPAGIITDELIRTLCEAFASEKLLRIFVRGEEDLATLPVILLAPPGSVVLYGQPDEGVVFVEVTEKKKEEIRALFEKLISKNQNNELDKIRRILDGHKDN</sequence>
<reference key="1">
    <citation type="journal article" date="2002" name="J. Mol. Microbiol. Biotechnol.">
        <title>The genome of Methanosarcina mazei: evidence for lateral gene transfer between Bacteria and Archaea.</title>
        <authorList>
            <person name="Deppenmeier U."/>
            <person name="Johann A."/>
            <person name="Hartsch T."/>
            <person name="Merkl R."/>
            <person name="Schmitz R.A."/>
            <person name="Martinez-Arias R."/>
            <person name="Henne A."/>
            <person name="Wiezer A."/>
            <person name="Baeumer S."/>
            <person name="Jacobi C."/>
            <person name="Brueggemann H."/>
            <person name="Lienard T."/>
            <person name="Christmann A."/>
            <person name="Boemecke M."/>
            <person name="Steckel S."/>
            <person name="Bhattacharyya A."/>
            <person name="Lykidis A."/>
            <person name="Overbeek R."/>
            <person name="Klenk H.-P."/>
            <person name="Gunsalus R.P."/>
            <person name="Fritz H.-J."/>
            <person name="Gottschalk G."/>
        </authorList>
    </citation>
    <scope>NUCLEOTIDE SEQUENCE [LARGE SCALE GENOMIC DNA]</scope>
    <source>
        <strain>ATCC BAA-159 / DSM 3647 / Goe1 / Go1 / JCM 11833 / OCM 88</strain>
    </source>
</reference>
<dbReference type="EC" id="2.7.1.237" evidence="1"/>
<dbReference type="EMBL" id="AE008384">
    <property type="protein sequence ID" value="AAM30294.1"/>
    <property type="molecule type" value="Genomic_DNA"/>
</dbReference>
<dbReference type="RefSeq" id="WP_011032549.1">
    <property type="nucleotide sequence ID" value="NC_003901.1"/>
</dbReference>
<dbReference type="SMR" id="Q8PZ96"/>
<dbReference type="KEGG" id="mma:MM_0598"/>
<dbReference type="PATRIC" id="fig|192952.21.peg.704"/>
<dbReference type="eggNOG" id="arCOG04076">
    <property type="taxonomic scope" value="Archaea"/>
</dbReference>
<dbReference type="HOGENOM" id="CLU_120795_1_0_2"/>
<dbReference type="UniPathway" id="UPA00241"/>
<dbReference type="Proteomes" id="UP000000595">
    <property type="component" value="Chromosome"/>
</dbReference>
<dbReference type="GO" id="GO:0005525">
    <property type="term" value="F:GTP binding"/>
    <property type="evidence" value="ECO:0007669"/>
    <property type="project" value="UniProtKB-UniRule"/>
</dbReference>
<dbReference type="GO" id="GO:0016301">
    <property type="term" value="F:kinase activity"/>
    <property type="evidence" value="ECO:0007669"/>
    <property type="project" value="UniProtKB-UniRule"/>
</dbReference>
<dbReference type="GO" id="GO:0015937">
    <property type="term" value="P:coenzyme A biosynthetic process"/>
    <property type="evidence" value="ECO:0007669"/>
    <property type="project" value="UniProtKB-UniRule"/>
</dbReference>
<dbReference type="HAMAP" id="MF_00590">
    <property type="entry name" value="Dephospho_CoA_kinase_GTP_dep"/>
    <property type="match status" value="1"/>
</dbReference>
<dbReference type="InterPro" id="IPR007164">
    <property type="entry name" value="GTP-dep_dephospho-CoA_kin"/>
</dbReference>
<dbReference type="PANTHER" id="PTHR40732:SF1">
    <property type="entry name" value="GTP-DEPENDENT DEPHOSPHO-COA KINASE"/>
    <property type="match status" value="1"/>
</dbReference>
<dbReference type="PANTHER" id="PTHR40732">
    <property type="entry name" value="UPF0218 PROTEIN TK1697"/>
    <property type="match status" value="1"/>
</dbReference>
<dbReference type="Pfam" id="PF04019">
    <property type="entry name" value="DUF359"/>
    <property type="match status" value="1"/>
</dbReference>
<dbReference type="PIRSF" id="PIRSF006533">
    <property type="entry name" value="UCP006533"/>
    <property type="match status" value="1"/>
</dbReference>
<keyword id="KW-0173">Coenzyme A biosynthesis</keyword>
<keyword id="KW-0342">GTP-binding</keyword>
<keyword id="KW-0418">Kinase</keyword>
<keyword id="KW-0547">Nucleotide-binding</keyword>
<keyword id="KW-0808">Transferase</keyword>